<feature type="chain" id="PRO_0000071735" description="V-type proton ATPase subunit e">
    <location>
        <begin position="1"/>
        <end position="71"/>
    </location>
</feature>
<feature type="topological domain" description="Lumenal" evidence="3">
    <location>
        <begin position="1"/>
        <end position="2"/>
    </location>
</feature>
<feature type="transmembrane region" description="Helical" evidence="2">
    <location>
        <begin position="3"/>
        <end position="23"/>
    </location>
</feature>
<feature type="topological domain" description="Cytoplasmic" evidence="3">
    <location>
        <begin position="24"/>
        <end position="35"/>
    </location>
</feature>
<feature type="transmembrane region" description="Helical" evidence="2">
    <location>
        <begin position="36"/>
        <end position="56"/>
    </location>
</feature>
<feature type="topological domain" description="Lumenal" evidence="3">
    <location>
        <begin position="57"/>
        <end position="71"/>
    </location>
</feature>
<proteinExistence type="inferred from homology"/>
<evidence type="ECO:0000250" key="1">
    <source>
        <dbReference type="UniProtKB" id="Q3E7B6"/>
    </source>
</evidence>
<evidence type="ECO:0000255" key="2"/>
<evidence type="ECO:0000305" key="3"/>
<sequence>MSFFHVVFVAFVIAAIGAAGWFVTPKGKNQTLLRTSLLLTLTCCYLMWAITYLCQLHPLITPRRSDLRMEY</sequence>
<keyword id="KW-0375">Hydrogen ion transport</keyword>
<keyword id="KW-0406">Ion transport</keyword>
<keyword id="KW-0472">Membrane</keyword>
<keyword id="KW-1185">Reference proteome</keyword>
<keyword id="KW-0812">Transmembrane</keyword>
<keyword id="KW-1133">Transmembrane helix</keyword>
<keyword id="KW-0813">Transport</keyword>
<keyword id="KW-0926">Vacuole</keyword>
<dbReference type="EMBL" id="AE017352">
    <property type="protein sequence ID" value="AAW46490.2"/>
    <property type="molecule type" value="Genomic_DNA"/>
</dbReference>
<dbReference type="RefSeq" id="XP_568007.1">
    <property type="nucleotide sequence ID" value="XM_568007.1"/>
</dbReference>
<dbReference type="SMR" id="Q5K8S8"/>
<dbReference type="FunCoup" id="Q5K8S8">
    <property type="interactions" value="82"/>
</dbReference>
<dbReference type="STRING" id="214684.Q5K8S8"/>
<dbReference type="PaxDb" id="214684-Q5K8S8"/>
<dbReference type="EnsemblFungi" id="AAW46490">
    <property type="protein sequence ID" value="AAW46490"/>
    <property type="gene ID" value="CNL04630"/>
</dbReference>
<dbReference type="VEuPathDB" id="FungiDB:CNL04630"/>
<dbReference type="InParanoid" id="Q5K8S8"/>
<dbReference type="Proteomes" id="UP000002149">
    <property type="component" value="Chromosome 12"/>
</dbReference>
<dbReference type="GO" id="GO:0000220">
    <property type="term" value="C:vacuolar proton-transporting V-type ATPase, V0 domain"/>
    <property type="evidence" value="ECO:0000318"/>
    <property type="project" value="GO_Central"/>
</dbReference>
<dbReference type="GO" id="GO:0046961">
    <property type="term" value="F:proton-transporting ATPase activity, rotational mechanism"/>
    <property type="evidence" value="ECO:0007669"/>
    <property type="project" value="InterPro"/>
</dbReference>
<dbReference type="GO" id="GO:0055085">
    <property type="term" value="P:transmembrane transport"/>
    <property type="evidence" value="ECO:0000318"/>
    <property type="project" value="GO_Central"/>
</dbReference>
<dbReference type="GO" id="GO:0007035">
    <property type="term" value="P:vacuolar acidification"/>
    <property type="evidence" value="ECO:0000318"/>
    <property type="project" value="GO_Central"/>
</dbReference>
<dbReference type="InterPro" id="IPR008389">
    <property type="entry name" value="ATPase_V0-cplx_e1/e2_su"/>
</dbReference>
<dbReference type="PANTHER" id="PTHR12263:SF0">
    <property type="entry name" value="V-TYPE PROTON ATPASE SUBUNIT"/>
    <property type="match status" value="1"/>
</dbReference>
<dbReference type="PANTHER" id="PTHR12263">
    <property type="entry name" value="VACUOLAR ATP SYNTHASE SUBUNIT H"/>
    <property type="match status" value="1"/>
</dbReference>
<dbReference type="Pfam" id="PF05493">
    <property type="entry name" value="ATP_synt_H"/>
    <property type="match status" value="1"/>
</dbReference>
<organism>
    <name type="scientific">Cryptococcus neoformans var. neoformans serotype D (strain JEC21 / ATCC MYA-565)</name>
    <name type="common">Filobasidiella neoformans</name>
    <dbReference type="NCBI Taxonomy" id="214684"/>
    <lineage>
        <taxon>Eukaryota</taxon>
        <taxon>Fungi</taxon>
        <taxon>Dikarya</taxon>
        <taxon>Basidiomycota</taxon>
        <taxon>Agaricomycotina</taxon>
        <taxon>Tremellomycetes</taxon>
        <taxon>Tremellales</taxon>
        <taxon>Cryptococcaceae</taxon>
        <taxon>Cryptococcus</taxon>
        <taxon>Cryptococcus neoformans species complex</taxon>
    </lineage>
</organism>
<comment type="function">
    <text evidence="1">Subunit of the V0 complex of vacuolar(H+)-ATPase (V-ATPase), a multisubunit enzyme composed of a peripheral complex (V1) that hydrolyzes ATP and a membrane integral complex (V0) that translocates protons (By similarity). V-ATPase is responsible for acidifying and maintaining the pH of intracellular compartments (By similarity).</text>
</comment>
<comment type="subunit">
    <text evidence="1">V-ATPase is a heteromultimeric enzyme composed of a peripheral catalytic V1 complex (components A to H) attached to an integral membrane V0 proton pore complex (components: a, c, c', c'', d, e, f and VOA1).</text>
</comment>
<comment type="subcellular location">
    <subcellularLocation>
        <location evidence="1">Vacuole membrane</location>
        <topology evidence="2">Multi-pass membrane protein</topology>
    </subcellularLocation>
</comment>
<comment type="similarity">
    <text evidence="3">Belongs to the V-ATPase e1/e2 subunit family.</text>
</comment>
<accession>Q5K8S8</accession>
<reference key="1">
    <citation type="journal article" date="2005" name="Science">
        <title>The genome of the basidiomycetous yeast and human pathogen Cryptococcus neoformans.</title>
        <authorList>
            <person name="Loftus B.J."/>
            <person name="Fung E."/>
            <person name="Roncaglia P."/>
            <person name="Rowley D."/>
            <person name="Amedeo P."/>
            <person name="Bruno D."/>
            <person name="Vamathevan J."/>
            <person name="Miranda M."/>
            <person name="Anderson I.J."/>
            <person name="Fraser J.A."/>
            <person name="Allen J.E."/>
            <person name="Bosdet I.E."/>
            <person name="Brent M.R."/>
            <person name="Chiu R."/>
            <person name="Doering T.L."/>
            <person name="Donlin M.J."/>
            <person name="D'Souza C.A."/>
            <person name="Fox D.S."/>
            <person name="Grinberg V."/>
            <person name="Fu J."/>
            <person name="Fukushima M."/>
            <person name="Haas B.J."/>
            <person name="Huang J.C."/>
            <person name="Janbon G."/>
            <person name="Jones S.J.M."/>
            <person name="Koo H.L."/>
            <person name="Krzywinski M.I."/>
            <person name="Kwon-Chung K.J."/>
            <person name="Lengeler K.B."/>
            <person name="Maiti R."/>
            <person name="Marra M.A."/>
            <person name="Marra R.E."/>
            <person name="Mathewson C.A."/>
            <person name="Mitchell T.G."/>
            <person name="Pertea M."/>
            <person name="Riggs F.R."/>
            <person name="Salzberg S.L."/>
            <person name="Schein J.E."/>
            <person name="Shvartsbeyn A."/>
            <person name="Shin H."/>
            <person name="Shumway M."/>
            <person name="Specht C.A."/>
            <person name="Suh B.B."/>
            <person name="Tenney A."/>
            <person name="Utterback T.R."/>
            <person name="Wickes B.L."/>
            <person name="Wortman J.R."/>
            <person name="Wye N.H."/>
            <person name="Kronstad J.W."/>
            <person name="Lodge J.K."/>
            <person name="Heitman J."/>
            <person name="Davis R.W."/>
            <person name="Fraser C.M."/>
            <person name="Hyman R.W."/>
        </authorList>
    </citation>
    <scope>NUCLEOTIDE SEQUENCE [LARGE SCALE GENOMIC DNA]</scope>
    <source>
        <strain>JEC21 / ATCC MYA-565</strain>
    </source>
</reference>
<gene>
    <name type="primary">VMA9</name>
    <name type="ordered locus">CNL04630</name>
</gene>
<protein>
    <recommendedName>
        <fullName>V-type proton ATPase subunit e</fullName>
        <shortName>V-ATPase subunit e</shortName>
    </recommendedName>
    <alternativeName>
        <fullName>Vacuolar proton pump subunit e</fullName>
    </alternativeName>
</protein>
<name>VA0E_CRYNJ</name>